<sequence>MPTVNQLIRKPRKPLVKRNKVPAMQACPQKRGVCTRVYTTTPKKPNSALRKVARVRLTNQFEVTSYIPGEGHNLQEHSVVLIRGGRVKDLPGVRYHIIRGVLDTQGVKDRRQRRSKYGAKRPK</sequence>
<keyword id="KW-0488">Methylation</keyword>
<keyword id="KW-1185">Reference proteome</keyword>
<keyword id="KW-0687">Ribonucleoprotein</keyword>
<keyword id="KW-0689">Ribosomal protein</keyword>
<keyword id="KW-0694">RNA-binding</keyword>
<keyword id="KW-0699">rRNA-binding</keyword>
<keyword id="KW-0820">tRNA-binding</keyword>
<evidence type="ECO:0000250" key="1"/>
<evidence type="ECO:0000255" key="2">
    <source>
        <dbReference type="HAMAP-Rule" id="MF_00403"/>
    </source>
</evidence>
<evidence type="ECO:0000256" key="3">
    <source>
        <dbReference type="SAM" id="MobiDB-lite"/>
    </source>
</evidence>
<evidence type="ECO:0000305" key="4"/>
<name>RS12_PARL1</name>
<dbReference type="EMBL" id="CP000774">
    <property type="protein sequence ID" value="ABS64339.1"/>
    <property type="molecule type" value="Genomic_DNA"/>
</dbReference>
<dbReference type="RefSeq" id="WP_012111654.1">
    <property type="nucleotide sequence ID" value="NC_009719.1"/>
</dbReference>
<dbReference type="SMR" id="A7HWQ6"/>
<dbReference type="STRING" id="402881.Plav_2731"/>
<dbReference type="KEGG" id="pla:Plav_2731"/>
<dbReference type="eggNOG" id="COG0048">
    <property type="taxonomic scope" value="Bacteria"/>
</dbReference>
<dbReference type="HOGENOM" id="CLU_104295_1_2_5"/>
<dbReference type="OrthoDB" id="9802366at2"/>
<dbReference type="Proteomes" id="UP000006377">
    <property type="component" value="Chromosome"/>
</dbReference>
<dbReference type="GO" id="GO:0015935">
    <property type="term" value="C:small ribosomal subunit"/>
    <property type="evidence" value="ECO:0007669"/>
    <property type="project" value="InterPro"/>
</dbReference>
<dbReference type="GO" id="GO:0019843">
    <property type="term" value="F:rRNA binding"/>
    <property type="evidence" value="ECO:0007669"/>
    <property type="project" value="UniProtKB-UniRule"/>
</dbReference>
<dbReference type="GO" id="GO:0003735">
    <property type="term" value="F:structural constituent of ribosome"/>
    <property type="evidence" value="ECO:0007669"/>
    <property type="project" value="InterPro"/>
</dbReference>
<dbReference type="GO" id="GO:0000049">
    <property type="term" value="F:tRNA binding"/>
    <property type="evidence" value="ECO:0007669"/>
    <property type="project" value="UniProtKB-UniRule"/>
</dbReference>
<dbReference type="GO" id="GO:0006412">
    <property type="term" value="P:translation"/>
    <property type="evidence" value="ECO:0007669"/>
    <property type="project" value="UniProtKB-UniRule"/>
</dbReference>
<dbReference type="CDD" id="cd03368">
    <property type="entry name" value="Ribosomal_S12"/>
    <property type="match status" value="1"/>
</dbReference>
<dbReference type="FunFam" id="2.40.50.140:FF:000001">
    <property type="entry name" value="30S ribosomal protein S12"/>
    <property type="match status" value="1"/>
</dbReference>
<dbReference type="Gene3D" id="2.40.50.140">
    <property type="entry name" value="Nucleic acid-binding proteins"/>
    <property type="match status" value="1"/>
</dbReference>
<dbReference type="HAMAP" id="MF_00403_B">
    <property type="entry name" value="Ribosomal_uS12_B"/>
    <property type="match status" value="1"/>
</dbReference>
<dbReference type="InterPro" id="IPR012340">
    <property type="entry name" value="NA-bd_OB-fold"/>
</dbReference>
<dbReference type="InterPro" id="IPR006032">
    <property type="entry name" value="Ribosomal_uS12"/>
</dbReference>
<dbReference type="InterPro" id="IPR005679">
    <property type="entry name" value="Ribosomal_uS12_bac"/>
</dbReference>
<dbReference type="NCBIfam" id="TIGR00981">
    <property type="entry name" value="rpsL_bact"/>
    <property type="match status" value="1"/>
</dbReference>
<dbReference type="PANTHER" id="PTHR11652">
    <property type="entry name" value="30S RIBOSOMAL PROTEIN S12 FAMILY MEMBER"/>
    <property type="match status" value="1"/>
</dbReference>
<dbReference type="Pfam" id="PF00164">
    <property type="entry name" value="Ribosom_S12_S23"/>
    <property type="match status" value="1"/>
</dbReference>
<dbReference type="PIRSF" id="PIRSF002133">
    <property type="entry name" value="Ribosomal_S12/S23"/>
    <property type="match status" value="1"/>
</dbReference>
<dbReference type="PRINTS" id="PR01034">
    <property type="entry name" value="RIBOSOMALS12"/>
</dbReference>
<dbReference type="SUPFAM" id="SSF50249">
    <property type="entry name" value="Nucleic acid-binding proteins"/>
    <property type="match status" value="1"/>
</dbReference>
<dbReference type="PROSITE" id="PS00055">
    <property type="entry name" value="RIBOSOMAL_S12"/>
    <property type="match status" value="1"/>
</dbReference>
<protein>
    <recommendedName>
        <fullName evidence="2">Small ribosomal subunit protein uS12</fullName>
    </recommendedName>
    <alternativeName>
        <fullName evidence="4">30S ribosomal protein S12</fullName>
    </alternativeName>
</protein>
<comment type="function">
    <text evidence="2">With S4 and S5 plays an important role in translational accuracy.</text>
</comment>
<comment type="function">
    <text evidence="2">Interacts with and stabilizes bases of the 16S rRNA that are involved in tRNA selection in the A site and with the mRNA backbone. Located at the interface of the 30S and 50S subunits, it traverses the body of the 30S subunit contacting proteins on the other side and probably holding the rRNA structure together. The combined cluster of proteins S8, S12 and S17 appears to hold together the shoulder and platform of the 30S subunit.</text>
</comment>
<comment type="subunit">
    <text evidence="2">Part of the 30S ribosomal subunit. Contacts proteins S8 and S17. May interact with IF1 in the 30S initiation complex.</text>
</comment>
<comment type="similarity">
    <text evidence="2">Belongs to the universal ribosomal protein uS12 family.</text>
</comment>
<feature type="chain" id="PRO_1000072258" description="Small ribosomal subunit protein uS12">
    <location>
        <begin position="1"/>
        <end position="123"/>
    </location>
</feature>
<feature type="region of interest" description="Disordered" evidence="3">
    <location>
        <begin position="104"/>
        <end position="123"/>
    </location>
</feature>
<feature type="compositionally biased region" description="Basic residues" evidence="3">
    <location>
        <begin position="110"/>
        <end position="123"/>
    </location>
</feature>
<feature type="modified residue" description="3-methylthioaspartic acid" evidence="1">
    <location>
        <position position="89"/>
    </location>
</feature>
<organism>
    <name type="scientific">Parvibaculum lavamentivorans (strain DS-1 / DSM 13023 / NCIMB 13966)</name>
    <dbReference type="NCBI Taxonomy" id="402881"/>
    <lineage>
        <taxon>Bacteria</taxon>
        <taxon>Pseudomonadati</taxon>
        <taxon>Pseudomonadota</taxon>
        <taxon>Alphaproteobacteria</taxon>
        <taxon>Hyphomicrobiales</taxon>
        <taxon>Parvibaculaceae</taxon>
        <taxon>Parvibaculum</taxon>
    </lineage>
</organism>
<accession>A7HWQ6</accession>
<gene>
    <name evidence="2" type="primary">rpsL</name>
    <name type="ordered locus">Plav_2731</name>
</gene>
<reference key="1">
    <citation type="journal article" date="2011" name="Stand. Genomic Sci.">
        <title>Complete genome sequence of Parvibaculum lavamentivorans type strain (DS-1(T)).</title>
        <authorList>
            <person name="Schleheck D."/>
            <person name="Weiss M."/>
            <person name="Pitluck S."/>
            <person name="Bruce D."/>
            <person name="Land M.L."/>
            <person name="Han S."/>
            <person name="Saunders E."/>
            <person name="Tapia R."/>
            <person name="Detter C."/>
            <person name="Brettin T."/>
            <person name="Han J."/>
            <person name="Woyke T."/>
            <person name="Goodwin L."/>
            <person name="Pennacchio L."/>
            <person name="Nolan M."/>
            <person name="Cook A.M."/>
            <person name="Kjelleberg S."/>
            <person name="Thomas T."/>
        </authorList>
    </citation>
    <scope>NUCLEOTIDE SEQUENCE [LARGE SCALE GENOMIC DNA]</scope>
    <source>
        <strain>DS-1 / DSM 13023 / NCIMB 13966</strain>
    </source>
</reference>
<proteinExistence type="inferred from homology"/>